<keyword id="KW-0235">DNA replication</keyword>
<keyword id="KW-1185">Reference proteome</keyword>
<gene>
    <name evidence="1" type="primary">diaA</name>
    <name type="ordered locus">plu4004</name>
</gene>
<protein>
    <recommendedName>
        <fullName evidence="1">DnaA initiator-associating protein DiaA</fullName>
    </recommendedName>
</protein>
<dbReference type="EMBL" id="BX571872">
    <property type="protein sequence ID" value="CAE16376.1"/>
    <property type="molecule type" value="Genomic_DNA"/>
</dbReference>
<dbReference type="RefSeq" id="WP_011148136.1">
    <property type="nucleotide sequence ID" value="NC_005126.1"/>
</dbReference>
<dbReference type="SMR" id="Q7N089"/>
<dbReference type="STRING" id="243265.plu4004"/>
<dbReference type="GeneID" id="48850229"/>
<dbReference type="KEGG" id="plu:plu4004"/>
<dbReference type="eggNOG" id="COG0279">
    <property type="taxonomic scope" value="Bacteria"/>
</dbReference>
<dbReference type="HOGENOM" id="CLU_080999_3_1_6"/>
<dbReference type="OrthoDB" id="9810929at2"/>
<dbReference type="Proteomes" id="UP000002514">
    <property type="component" value="Chromosome"/>
</dbReference>
<dbReference type="GO" id="GO:0097367">
    <property type="term" value="F:carbohydrate derivative binding"/>
    <property type="evidence" value="ECO:0007669"/>
    <property type="project" value="InterPro"/>
</dbReference>
<dbReference type="GO" id="GO:1901135">
    <property type="term" value="P:carbohydrate derivative metabolic process"/>
    <property type="evidence" value="ECO:0007669"/>
    <property type="project" value="InterPro"/>
</dbReference>
<dbReference type="GO" id="GO:0006260">
    <property type="term" value="P:DNA replication"/>
    <property type="evidence" value="ECO:0007669"/>
    <property type="project" value="UniProtKB-UniRule"/>
</dbReference>
<dbReference type="CDD" id="cd05006">
    <property type="entry name" value="SIS_GmhA"/>
    <property type="match status" value="1"/>
</dbReference>
<dbReference type="FunFam" id="3.40.50.10490:FF:000006">
    <property type="entry name" value="DnaA initiator-associating protein DiaA"/>
    <property type="match status" value="1"/>
</dbReference>
<dbReference type="Gene3D" id="3.40.50.10490">
    <property type="entry name" value="Glucose-6-phosphate isomerase like protein, domain 1"/>
    <property type="match status" value="1"/>
</dbReference>
<dbReference type="HAMAP" id="MF_01157">
    <property type="entry name" value="SIS_DiaA"/>
    <property type="match status" value="1"/>
</dbReference>
<dbReference type="InterPro" id="IPR023070">
    <property type="entry name" value="DiaA"/>
</dbReference>
<dbReference type="InterPro" id="IPR035461">
    <property type="entry name" value="GmhA/DiaA"/>
</dbReference>
<dbReference type="InterPro" id="IPR001347">
    <property type="entry name" value="SIS_dom"/>
</dbReference>
<dbReference type="InterPro" id="IPR046348">
    <property type="entry name" value="SIS_dom_sf"/>
</dbReference>
<dbReference type="InterPro" id="IPR050099">
    <property type="entry name" value="SIS_GmhA/DiaA_subfam"/>
</dbReference>
<dbReference type="NCBIfam" id="NF008138">
    <property type="entry name" value="PRK10886.1"/>
    <property type="match status" value="1"/>
</dbReference>
<dbReference type="PANTHER" id="PTHR30390:SF6">
    <property type="entry name" value="DNAA INITIATOR-ASSOCIATING PROTEIN DIAA"/>
    <property type="match status" value="1"/>
</dbReference>
<dbReference type="PANTHER" id="PTHR30390">
    <property type="entry name" value="SEDOHEPTULOSE 7-PHOSPHATE ISOMERASE / DNAA INITIATOR-ASSOCIATING FACTOR FOR REPLICATION INITIATION"/>
    <property type="match status" value="1"/>
</dbReference>
<dbReference type="Pfam" id="PF13580">
    <property type="entry name" value="SIS_2"/>
    <property type="match status" value="1"/>
</dbReference>
<dbReference type="SUPFAM" id="SSF53697">
    <property type="entry name" value="SIS domain"/>
    <property type="match status" value="1"/>
</dbReference>
<dbReference type="PROSITE" id="PS51464">
    <property type="entry name" value="SIS"/>
    <property type="match status" value="1"/>
</dbReference>
<reference key="1">
    <citation type="journal article" date="2003" name="Nat. Biotechnol.">
        <title>The genome sequence of the entomopathogenic bacterium Photorhabdus luminescens.</title>
        <authorList>
            <person name="Duchaud E."/>
            <person name="Rusniok C."/>
            <person name="Frangeul L."/>
            <person name="Buchrieser C."/>
            <person name="Givaudan A."/>
            <person name="Taourit S."/>
            <person name="Bocs S."/>
            <person name="Boursaux-Eude C."/>
            <person name="Chandler M."/>
            <person name="Charles J.-F."/>
            <person name="Dassa E."/>
            <person name="Derose R."/>
            <person name="Derzelle S."/>
            <person name="Freyssinet G."/>
            <person name="Gaudriault S."/>
            <person name="Medigue C."/>
            <person name="Lanois A."/>
            <person name="Powell K."/>
            <person name="Siguier P."/>
            <person name="Vincent R."/>
            <person name="Wingate V."/>
            <person name="Zouine M."/>
            <person name="Glaser P."/>
            <person name="Boemare N."/>
            <person name="Danchin A."/>
            <person name="Kunst F."/>
        </authorList>
    </citation>
    <scope>NUCLEOTIDE SEQUENCE [LARGE SCALE GENOMIC DNA]</scope>
    <source>
        <strain>DSM 15139 / CIP 105565 / TT01</strain>
    </source>
</reference>
<proteinExistence type="inferred from homology"/>
<sequence>MLDRIKVCFTESIQTQIAAAEALPDAISRAAIMMVQSLLNGNKILCCGNGGSAATAQRFAANMINRFETERPSLPALSLNADNVVITAISSNKQHDEIYAKQVRALGQPGDVLLAISTHGNSRDIVKAVEAAVTRDMTIVALTGYDGGELAGLLGPQDVEIRIPSHRSTRIQEVHMLTVNCLCDLIDNTLFPHQDD</sequence>
<organism>
    <name type="scientific">Photorhabdus laumondii subsp. laumondii (strain DSM 15139 / CIP 105565 / TT01)</name>
    <name type="common">Photorhabdus luminescens subsp. laumondii</name>
    <dbReference type="NCBI Taxonomy" id="243265"/>
    <lineage>
        <taxon>Bacteria</taxon>
        <taxon>Pseudomonadati</taxon>
        <taxon>Pseudomonadota</taxon>
        <taxon>Gammaproteobacteria</taxon>
        <taxon>Enterobacterales</taxon>
        <taxon>Morganellaceae</taxon>
        <taxon>Photorhabdus</taxon>
    </lineage>
</organism>
<name>DIAA_PHOLL</name>
<accession>Q7N089</accession>
<comment type="function">
    <text evidence="1">Required for the timely initiation of chromosomal replication via direct interactions with the DnaA initiator protein.</text>
</comment>
<comment type="subunit">
    <text evidence="1">Homotetramer; dimer of dimers.</text>
</comment>
<comment type="similarity">
    <text evidence="1">Belongs to the SIS family. DiaA subfamily.</text>
</comment>
<feature type="chain" id="PRO_0000136559" description="DnaA initiator-associating protein DiaA">
    <location>
        <begin position="1"/>
        <end position="196"/>
    </location>
</feature>
<feature type="domain" description="SIS" evidence="1">
    <location>
        <begin position="34"/>
        <end position="196"/>
    </location>
</feature>
<evidence type="ECO:0000255" key="1">
    <source>
        <dbReference type="HAMAP-Rule" id="MF_01157"/>
    </source>
</evidence>